<gene>
    <name evidence="2" type="primary">bioH</name>
    <name type="ordered locus">SNSL254_A3783</name>
</gene>
<sequence>MNDIWWQTYGEGNCHLVLLHGWGLNAEVWHCIREELGSHFTLHLVDLPGYGRSSGFGAMTLEEMTAQVAKNAPDQAIWLGWSLGGLVASQMAFTHPERVQALVTVASSPCFSAREGWPGIKPEILGGFQQQLSDDFQRTVERFLALQTLGTETARQDARTLKSVVLAQPMPDVEVLNGGLEILKTVDLREALKNVNMPFLRLYGYLDGLVPRKIAPLLDTLWPHSTSQIMEKAAHAPFISHPAAFCQALMTLKSSL</sequence>
<keyword id="KW-0093">Biotin biosynthesis</keyword>
<keyword id="KW-0963">Cytoplasm</keyword>
<keyword id="KW-0378">Hydrolase</keyword>
<keyword id="KW-0719">Serine esterase</keyword>
<protein>
    <recommendedName>
        <fullName evidence="2">Pimeloyl-[acyl-carrier protein] methyl ester esterase</fullName>
        <ecNumber evidence="2">3.1.1.85</ecNumber>
    </recommendedName>
    <alternativeName>
        <fullName evidence="2">Biotin synthesis protein BioH</fullName>
    </alternativeName>
    <alternativeName>
        <fullName evidence="2">Carboxylesterase BioH</fullName>
    </alternativeName>
</protein>
<proteinExistence type="inferred from homology"/>
<evidence type="ECO:0000255" key="1"/>
<evidence type="ECO:0000255" key="2">
    <source>
        <dbReference type="HAMAP-Rule" id="MF_01260"/>
    </source>
</evidence>
<accession>B4SVL3</accession>
<name>BIOH_SALNS</name>
<comment type="function">
    <text evidence="2">The physiological role of BioH is to remove the methyl group introduced by BioC when the pimeloyl moiety is complete. It allows to synthesize pimeloyl-ACP via the fatty acid synthetic pathway through the hydrolysis of the ester bonds of pimeloyl-ACP esters.</text>
</comment>
<comment type="catalytic activity">
    <reaction evidence="2">
        <text>6-carboxyhexanoyl-[ACP] methyl ester + H2O = 6-carboxyhexanoyl-[ACP] + methanol + H(+)</text>
        <dbReference type="Rhea" id="RHEA:42700"/>
        <dbReference type="Rhea" id="RHEA-COMP:9955"/>
        <dbReference type="Rhea" id="RHEA-COMP:10186"/>
        <dbReference type="ChEBI" id="CHEBI:15377"/>
        <dbReference type="ChEBI" id="CHEBI:15378"/>
        <dbReference type="ChEBI" id="CHEBI:17790"/>
        <dbReference type="ChEBI" id="CHEBI:78846"/>
        <dbReference type="ChEBI" id="CHEBI:82735"/>
        <dbReference type="EC" id="3.1.1.85"/>
    </reaction>
</comment>
<comment type="pathway">
    <text evidence="2">Cofactor biosynthesis; biotin biosynthesis.</text>
</comment>
<comment type="subunit">
    <text evidence="2">Monomer.</text>
</comment>
<comment type="subcellular location">
    <subcellularLocation>
        <location evidence="2">Cytoplasm</location>
    </subcellularLocation>
</comment>
<comment type="similarity">
    <text evidence="2">Belongs to the AB hydrolase superfamily. Carboxylesterase BioH family.</text>
</comment>
<reference key="1">
    <citation type="journal article" date="2011" name="J. Bacteriol.">
        <title>Comparative genomics of 28 Salmonella enterica isolates: evidence for CRISPR-mediated adaptive sublineage evolution.</title>
        <authorList>
            <person name="Fricke W.F."/>
            <person name="Mammel M.K."/>
            <person name="McDermott P.F."/>
            <person name="Tartera C."/>
            <person name="White D.G."/>
            <person name="Leclerc J.E."/>
            <person name="Ravel J."/>
            <person name="Cebula T.A."/>
        </authorList>
    </citation>
    <scope>NUCLEOTIDE SEQUENCE [LARGE SCALE GENOMIC DNA]</scope>
    <source>
        <strain>SL254</strain>
    </source>
</reference>
<dbReference type="EC" id="3.1.1.85" evidence="2"/>
<dbReference type="EMBL" id="CP001113">
    <property type="protein sequence ID" value="ACF65383.1"/>
    <property type="molecule type" value="Genomic_DNA"/>
</dbReference>
<dbReference type="RefSeq" id="WP_000998139.1">
    <property type="nucleotide sequence ID" value="NZ_CCMR01000004.1"/>
</dbReference>
<dbReference type="SMR" id="B4SVL3"/>
<dbReference type="ESTHER" id="salty-BIOH">
    <property type="family name" value="BioH"/>
</dbReference>
<dbReference type="KEGG" id="see:SNSL254_A3783"/>
<dbReference type="HOGENOM" id="CLU_020336_12_2_6"/>
<dbReference type="UniPathway" id="UPA00078"/>
<dbReference type="Proteomes" id="UP000008824">
    <property type="component" value="Chromosome"/>
</dbReference>
<dbReference type="GO" id="GO:0005737">
    <property type="term" value="C:cytoplasm"/>
    <property type="evidence" value="ECO:0007669"/>
    <property type="project" value="UniProtKB-SubCell"/>
</dbReference>
<dbReference type="GO" id="GO:0090499">
    <property type="term" value="F:pimelyl-[acyl-carrier protein] methyl ester esterase activity"/>
    <property type="evidence" value="ECO:0007669"/>
    <property type="project" value="UniProtKB-EC"/>
</dbReference>
<dbReference type="GO" id="GO:0009102">
    <property type="term" value="P:biotin biosynthetic process"/>
    <property type="evidence" value="ECO:0007669"/>
    <property type="project" value="UniProtKB-UniRule"/>
</dbReference>
<dbReference type="FunFam" id="3.40.50.1820:FF:000045">
    <property type="entry name" value="Pimeloyl-[acyl-carrier protein] methyl ester esterase"/>
    <property type="match status" value="1"/>
</dbReference>
<dbReference type="Gene3D" id="3.40.50.1820">
    <property type="entry name" value="alpha/beta hydrolase"/>
    <property type="match status" value="1"/>
</dbReference>
<dbReference type="HAMAP" id="MF_01260">
    <property type="entry name" value="Carboxylester"/>
    <property type="match status" value="1"/>
</dbReference>
<dbReference type="InterPro" id="IPR000073">
    <property type="entry name" value="AB_hydrolase_1"/>
</dbReference>
<dbReference type="InterPro" id="IPR029058">
    <property type="entry name" value="AB_hydrolase_fold"/>
</dbReference>
<dbReference type="InterPro" id="IPR010076">
    <property type="entry name" value="BioH"/>
</dbReference>
<dbReference type="InterPro" id="IPR050228">
    <property type="entry name" value="Carboxylesterase_BioH"/>
</dbReference>
<dbReference type="NCBIfam" id="TIGR01738">
    <property type="entry name" value="bioH"/>
    <property type="match status" value="1"/>
</dbReference>
<dbReference type="NCBIfam" id="NF007674">
    <property type="entry name" value="PRK10349.1"/>
    <property type="match status" value="1"/>
</dbReference>
<dbReference type="PANTHER" id="PTHR43194">
    <property type="entry name" value="HYDROLASE ALPHA/BETA FOLD FAMILY"/>
    <property type="match status" value="1"/>
</dbReference>
<dbReference type="PANTHER" id="PTHR43194:SF5">
    <property type="entry name" value="PIMELOYL-[ACYL-CARRIER PROTEIN] METHYL ESTER ESTERASE"/>
    <property type="match status" value="1"/>
</dbReference>
<dbReference type="Pfam" id="PF00561">
    <property type="entry name" value="Abhydrolase_1"/>
    <property type="match status" value="1"/>
</dbReference>
<dbReference type="SUPFAM" id="SSF53474">
    <property type="entry name" value="alpha/beta-Hydrolases"/>
    <property type="match status" value="1"/>
</dbReference>
<organism>
    <name type="scientific">Salmonella newport (strain SL254)</name>
    <dbReference type="NCBI Taxonomy" id="423368"/>
    <lineage>
        <taxon>Bacteria</taxon>
        <taxon>Pseudomonadati</taxon>
        <taxon>Pseudomonadota</taxon>
        <taxon>Gammaproteobacteria</taxon>
        <taxon>Enterobacterales</taxon>
        <taxon>Enterobacteriaceae</taxon>
        <taxon>Salmonella</taxon>
    </lineage>
</organism>
<feature type="chain" id="PRO_1000140002" description="Pimeloyl-[acyl-carrier protein] methyl ester esterase">
    <location>
        <begin position="1"/>
        <end position="256"/>
    </location>
</feature>
<feature type="domain" description="AB hydrolase-1" evidence="1">
    <location>
        <begin position="15"/>
        <end position="242"/>
    </location>
</feature>
<feature type="active site" description="Nucleophile" evidence="2">
    <location>
        <position position="82"/>
    </location>
</feature>
<feature type="active site" evidence="2">
    <location>
        <position position="207"/>
    </location>
</feature>
<feature type="active site" evidence="2">
    <location>
        <position position="235"/>
    </location>
</feature>
<feature type="binding site" evidence="2">
    <location>
        <position position="22"/>
    </location>
    <ligand>
        <name>substrate</name>
    </ligand>
</feature>
<feature type="binding site" evidence="2">
    <location>
        <begin position="82"/>
        <end position="83"/>
    </location>
    <ligand>
        <name>substrate</name>
    </ligand>
</feature>
<feature type="binding site" evidence="2">
    <location>
        <begin position="143"/>
        <end position="147"/>
    </location>
    <ligand>
        <name>substrate</name>
    </ligand>
</feature>
<feature type="binding site" evidence="2">
    <location>
        <position position="235"/>
    </location>
    <ligand>
        <name>substrate</name>
    </ligand>
</feature>